<keyword id="KW-0066">ATP synthesis</keyword>
<keyword id="KW-0997">Cell inner membrane</keyword>
<keyword id="KW-1003">Cell membrane</keyword>
<keyword id="KW-0138">CF(0)</keyword>
<keyword id="KW-0375">Hydrogen ion transport</keyword>
<keyword id="KW-0406">Ion transport</keyword>
<keyword id="KW-0472">Membrane</keyword>
<keyword id="KW-1185">Reference proteome</keyword>
<keyword id="KW-0812">Transmembrane</keyword>
<keyword id="KW-1133">Transmembrane helix</keyword>
<keyword id="KW-0813">Transport</keyword>
<gene>
    <name type="primary">atpF2</name>
    <name type="synonym">atpG</name>
    <name type="ordered locus">Jann_0769</name>
</gene>
<name>ATPF2_JANSC</name>
<proteinExistence type="inferred from homology"/>
<protein>
    <recommendedName>
        <fullName>ATP synthase subunit b 2</fullName>
    </recommendedName>
    <alternativeName>
        <fullName>ATP synthase F(0) sector subunit b 2</fullName>
    </alternativeName>
    <alternativeName>
        <fullName>ATPase subunit I 2</fullName>
    </alternativeName>
    <alternativeName>
        <fullName>F-type ATPase subunit b 2</fullName>
        <shortName>F-ATPase subunit b 2</shortName>
    </alternativeName>
</protein>
<organism>
    <name type="scientific">Jannaschia sp. (strain CCS1)</name>
    <dbReference type="NCBI Taxonomy" id="290400"/>
    <lineage>
        <taxon>Bacteria</taxon>
        <taxon>Pseudomonadati</taxon>
        <taxon>Pseudomonadota</taxon>
        <taxon>Alphaproteobacteria</taxon>
        <taxon>Rhodobacterales</taxon>
        <taxon>Roseobacteraceae</taxon>
        <taxon>Jannaschia</taxon>
    </lineage>
</organism>
<evidence type="ECO:0000250" key="1"/>
<evidence type="ECO:0000255" key="2"/>
<evidence type="ECO:0000305" key="3"/>
<sequence length="193" mass="20224">MADEAETLDAAHGATDAAHGAADAAHASSPGMPQLDFATFPNQIFWLVLTLLAIYFVLTKIALPRISSVIAERQGTLTNDLAAAEDLKRQAAEAEESYNTALANARAEASRIAQETRDEIQAQTQVEIDKADAQIAARTAEGEARIAEIEAGAIATAEEVARDVATEIVRAFGPGQDVDAAAVADAVANRVRG</sequence>
<accession>Q28UC6</accession>
<dbReference type="EMBL" id="CP000264">
    <property type="protein sequence ID" value="ABD53686.1"/>
    <property type="molecule type" value="Genomic_DNA"/>
</dbReference>
<dbReference type="RefSeq" id="WP_011453894.1">
    <property type="nucleotide sequence ID" value="NC_007802.1"/>
</dbReference>
<dbReference type="SMR" id="Q28UC6"/>
<dbReference type="STRING" id="290400.Jann_0769"/>
<dbReference type="KEGG" id="jan:Jann_0769"/>
<dbReference type="eggNOG" id="COG0711">
    <property type="taxonomic scope" value="Bacteria"/>
</dbReference>
<dbReference type="HOGENOM" id="CLU_079215_1_0_5"/>
<dbReference type="OrthoDB" id="9805716at2"/>
<dbReference type="Proteomes" id="UP000008326">
    <property type="component" value="Chromosome"/>
</dbReference>
<dbReference type="GO" id="GO:0005886">
    <property type="term" value="C:plasma membrane"/>
    <property type="evidence" value="ECO:0007669"/>
    <property type="project" value="UniProtKB-SubCell"/>
</dbReference>
<dbReference type="GO" id="GO:0045259">
    <property type="term" value="C:proton-transporting ATP synthase complex"/>
    <property type="evidence" value="ECO:0007669"/>
    <property type="project" value="UniProtKB-KW"/>
</dbReference>
<dbReference type="GO" id="GO:0046933">
    <property type="term" value="F:proton-transporting ATP synthase activity, rotational mechanism"/>
    <property type="evidence" value="ECO:0007669"/>
    <property type="project" value="UniProtKB-UniRule"/>
</dbReference>
<dbReference type="GO" id="GO:0046961">
    <property type="term" value="F:proton-transporting ATPase activity, rotational mechanism"/>
    <property type="evidence" value="ECO:0007669"/>
    <property type="project" value="TreeGrafter"/>
</dbReference>
<dbReference type="CDD" id="cd06503">
    <property type="entry name" value="ATP-synt_Fo_b"/>
    <property type="match status" value="1"/>
</dbReference>
<dbReference type="HAMAP" id="MF_01398">
    <property type="entry name" value="ATP_synth_b_bprime"/>
    <property type="match status" value="1"/>
</dbReference>
<dbReference type="InterPro" id="IPR002146">
    <property type="entry name" value="ATP_synth_b/b'su_bac/chlpt"/>
</dbReference>
<dbReference type="InterPro" id="IPR050059">
    <property type="entry name" value="ATP_synthase_B_chain"/>
</dbReference>
<dbReference type="NCBIfam" id="NF009988">
    <property type="entry name" value="PRK13454.1"/>
    <property type="match status" value="1"/>
</dbReference>
<dbReference type="PANTHER" id="PTHR33445:SF1">
    <property type="entry name" value="ATP SYNTHASE SUBUNIT B"/>
    <property type="match status" value="1"/>
</dbReference>
<dbReference type="PANTHER" id="PTHR33445">
    <property type="entry name" value="ATP SYNTHASE SUBUNIT B', CHLOROPLASTIC"/>
    <property type="match status" value="1"/>
</dbReference>
<dbReference type="Pfam" id="PF00430">
    <property type="entry name" value="ATP-synt_B"/>
    <property type="match status" value="1"/>
</dbReference>
<reference key="1">
    <citation type="submission" date="2006-02" db="EMBL/GenBank/DDBJ databases">
        <title>Complete sequence of chromosome of Jannaschia sp. CCS1.</title>
        <authorList>
            <consortium name="US DOE Joint Genome Institute"/>
            <person name="Copeland A."/>
            <person name="Lucas S."/>
            <person name="Lapidus A."/>
            <person name="Barry K."/>
            <person name="Detter J.C."/>
            <person name="Glavina del Rio T."/>
            <person name="Hammon N."/>
            <person name="Israni S."/>
            <person name="Pitluck S."/>
            <person name="Brettin T."/>
            <person name="Bruce D."/>
            <person name="Han C."/>
            <person name="Tapia R."/>
            <person name="Gilna P."/>
            <person name="Chertkov O."/>
            <person name="Saunders E."/>
            <person name="Schmutz J."/>
            <person name="Larimer F."/>
            <person name="Land M."/>
            <person name="Kyrpides N."/>
            <person name="Lykidis A."/>
            <person name="Moran M.A."/>
            <person name="Belas R."/>
            <person name="Ye W."/>
            <person name="Buchan A."/>
            <person name="Gonzalez J.M."/>
            <person name="Schell M.A."/>
            <person name="Richardson P."/>
        </authorList>
    </citation>
    <scope>NUCLEOTIDE SEQUENCE [LARGE SCALE GENOMIC DNA]</scope>
    <source>
        <strain>CCS1</strain>
    </source>
</reference>
<comment type="function">
    <text evidence="1">F(1)F(0) ATP synthase produces ATP from ADP in the presence of a proton or sodium gradient. F-type ATPases consist of two structural domains, F(1) containing the extramembraneous catalytic core and F(0) containing the membrane proton channel, linked together by a central stalk and a peripheral stalk. During catalysis, ATP synthesis in the catalytic domain of F(1) is coupled via a rotary mechanism of the central stalk subunits to proton translocation (By similarity).</text>
</comment>
<comment type="function">
    <text evidence="1">Component of the F(0) channel, it forms part of the peripheral stalk, linking F(1) to F(0). The b'-subunit is a diverged and duplicated form of b found in plants and photosynthetic bacteria (By similarity).</text>
</comment>
<comment type="subunit">
    <text evidence="1">F-type ATPases have 2 components, F(1) - the catalytic core - and F(0) - the membrane proton channel. F(1) has five subunits: alpha(3), beta(3), gamma(1), delta(1), epsilon(1). F(0) has three main subunits: a(1), b(2) and c(10-14). The alpha and beta chains form an alternating ring which encloses part of the gamma chain. F(1) is attached to F(0) by a central stalk formed by the gamma and epsilon chains, while a peripheral stalk is formed by the delta and b chains (By similarity).</text>
</comment>
<comment type="subcellular location">
    <subcellularLocation>
        <location evidence="1">Cell inner membrane</location>
        <topology evidence="1">Single-pass membrane protein</topology>
    </subcellularLocation>
</comment>
<comment type="similarity">
    <text evidence="3">Belongs to the ATPase B chain family.</text>
</comment>
<feature type="chain" id="PRO_0000369010" description="ATP synthase subunit b 2">
    <location>
        <begin position="1"/>
        <end position="193"/>
    </location>
</feature>
<feature type="transmembrane region" description="Helical" evidence="2">
    <location>
        <begin position="44"/>
        <end position="64"/>
    </location>
</feature>